<keyword id="KW-0028">Amino-acid biosynthesis</keyword>
<keyword id="KW-0055">Arginine biosynthesis</keyword>
<keyword id="KW-0067">ATP-binding</keyword>
<keyword id="KW-0963">Cytoplasm</keyword>
<keyword id="KW-0418">Kinase</keyword>
<keyword id="KW-0547">Nucleotide-binding</keyword>
<keyword id="KW-1185">Reference proteome</keyword>
<keyword id="KW-0808">Transferase</keyword>
<protein>
    <recommendedName>
        <fullName evidence="1">Acetylglutamate kinase</fullName>
        <ecNumber evidence="1">2.7.2.8</ecNumber>
    </recommendedName>
    <alternativeName>
        <fullName evidence="1">N-acetyl-L-glutamate 5-phosphotransferase</fullName>
    </alternativeName>
    <alternativeName>
        <fullName evidence="1">NAG kinase</fullName>
        <shortName evidence="1">NAGK</shortName>
    </alternativeName>
</protein>
<gene>
    <name evidence="1" type="primary">argB</name>
    <name type="ordered locus">Ccur92_07480</name>
    <name type="ORF">CCV52592_0128</name>
</gene>
<reference key="1">
    <citation type="submission" date="2007-07" db="EMBL/GenBank/DDBJ databases">
        <title>Genome sequence of Campylobacter curvus 525.92 isolated from human feces.</title>
        <authorList>
            <person name="Fouts D.E."/>
            <person name="Mongodin E.F."/>
            <person name="Puiu D."/>
            <person name="Sebastian Y."/>
            <person name="Miller W.G."/>
            <person name="Mandrell R.E."/>
            <person name="Lastovica A.J."/>
            <person name="Nelson K.E."/>
        </authorList>
    </citation>
    <scope>NUCLEOTIDE SEQUENCE [LARGE SCALE GENOMIC DNA]</scope>
    <source>
        <strain>525.92</strain>
    </source>
</reference>
<organism>
    <name type="scientific">Campylobacter curvus (strain 525.92)</name>
    <dbReference type="NCBI Taxonomy" id="360105"/>
    <lineage>
        <taxon>Bacteria</taxon>
        <taxon>Pseudomonadati</taxon>
        <taxon>Campylobacterota</taxon>
        <taxon>Epsilonproteobacteria</taxon>
        <taxon>Campylobacterales</taxon>
        <taxon>Campylobacteraceae</taxon>
        <taxon>Campylobacter</taxon>
    </lineage>
</organism>
<proteinExistence type="inferred from homology"/>
<evidence type="ECO:0000255" key="1">
    <source>
        <dbReference type="HAMAP-Rule" id="MF_00082"/>
    </source>
</evidence>
<accession>A7GXW0</accession>
<name>ARGB_CAMC5</name>
<feature type="chain" id="PRO_1000010492" description="Acetylglutamate kinase">
    <location>
        <begin position="1"/>
        <end position="281"/>
    </location>
</feature>
<feature type="binding site" evidence="1">
    <location>
        <begin position="64"/>
        <end position="65"/>
    </location>
    <ligand>
        <name>substrate</name>
    </ligand>
</feature>
<feature type="binding site" evidence="1">
    <location>
        <position position="86"/>
    </location>
    <ligand>
        <name>substrate</name>
    </ligand>
</feature>
<feature type="binding site" evidence="1">
    <location>
        <position position="179"/>
    </location>
    <ligand>
        <name>substrate</name>
    </ligand>
</feature>
<feature type="site" description="Transition state stabilizer" evidence="1">
    <location>
        <position position="29"/>
    </location>
</feature>
<feature type="site" description="Transition state stabilizer" evidence="1">
    <location>
        <position position="239"/>
    </location>
</feature>
<comment type="function">
    <text evidence="1">Catalyzes the ATP-dependent phosphorylation of N-acetyl-L-glutamate.</text>
</comment>
<comment type="catalytic activity">
    <reaction evidence="1">
        <text>N-acetyl-L-glutamate + ATP = N-acetyl-L-glutamyl 5-phosphate + ADP</text>
        <dbReference type="Rhea" id="RHEA:14629"/>
        <dbReference type="ChEBI" id="CHEBI:30616"/>
        <dbReference type="ChEBI" id="CHEBI:44337"/>
        <dbReference type="ChEBI" id="CHEBI:57936"/>
        <dbReference type="ChEBI" id="CHEBI:456216"/>
        <dbReference type="EC" id="2.7.2.8"/>
    </reaction>
</comment>
<comment type="pathway">
    <text evidence="1">Amino-acid biosynthesis; L-arginine biosynthesis; N(2)-acetyl-L-ornithine from L-glutamate: step 2/4.</text>
</comment>
<comment type="subcellular location">
    <subcellularLocation>
        <location evidence="1">Cytoplasm</location>
    </subcellularLocation>
</comment>
<comment type="similarity">
    <text evidence="1">Belongs to the acetylglutamate kinase family. ArgB subfamily.</text>
</comment>
<dbReference type="EC" id="2.7.2.8" evidence="1"/>
<dbReference type="EMBL" id="CP000767">
    <property type="protein sequence ID" value="EAU00238.1"/>
    <property type="molecule type" value="Genomic_DNA"/>
</dbReference>
<dbReference type="RefSeq" id="WP_009650002.1">
    <property type="nucleotide sequence ID" value="NC_009715.2"/>
</dbReference>
<dbReference type="SMR" id="A7GXW0"/>
<dbReference type="STRING" id="360105.CCV52592_0128"/>
<dbReference type="KEGG" id="ccv:CCV52592_0128"/>
<dbReference type="HOGENOM" id="CLU_053680_0_0_7"/>
<dbReference type="OrthoDB" id="9803155at2"/>
<dbReference type="UniPathway" id="UPA00068">
    <property type="reaction ID" value="UER00107"/>
</dbReference>
<dbReference type="Proteomes" id="UP000006380">
    <property type="component" value="Chromosome"/>
</dbReference>
<dbReference type="GO" id="GO:0005737">
    <property type="term" value="C:cytoplasm"/>
    <property type="evidence" value="ECO:0007669"/>
    <property type="project" value="UniProtKB-SubCell"/>
</dbReference>
<dbReference type="GO" id="GO:0003991">
    <property type="term" value="F:acetylglutamate kinase activity"/>
    <property type="evidence" value="ECO:0007669"/>
    <property type="project" value="UniProtKB-UniRule"/>
</dbReference>
<dbReference type="GO" id="GO:0005524">
    <property type="term" value="F:ATP binding"/>
    <property type="evidence" value="ECO:0007669"/>
    <property type="project" value="UniProtKB-UniRule"/>
</dbReference>
<dbReference type="GO" id="GO:0042450">
    <property type="term" value="P:arginine biosynthetic process via ornithine"/>
    <property type="evidence" value="ECO:0007669"/>
    <property type="project" value="UniProtKB-UniRule"/>
</dbReference>
<dbReference type="GO" id="GO:0006526">
    <property type="term" value="P:L-arginine biosynthetic process"/>
    <property type="evidence" value="ECO:0007669"/>
    <property type="project" value="UniProtKB-UniPathway"/>
</dbReference>
<dbReference type="CDD" id="cd04250">
    <property type="entry name" value="AAK_NAGK-C"/>
    <property type="match status" value="1"/>
</dbReference>
<dbReference type="FunFam" id="3.40.1160.10:FF:000004">
    <property type="entry name" value="Acetylglutamate kinase"/>
    <property type="match status" value="1"/>
</dbReference>
<dbReference type="Gene3D" id="3.40.1160.10">
    <property type="entry name" value="Acetylglutamate kinase-like"/>
    <property type="match status" value="1"/>
</dbReference>
<dbReference type="HAMAP" id="MF_00082">
    <property type="entry name" value="ArgB"/>
    <property type="match status" value="1"/>
</dbReference>
<dbReference type="InterPro" id="IPR036393">
    <property type="entry name" value="AceGlu_kinase-like_sf"/>
</dbReference>
<dbReference type="InterPro" id="IPR004662">
    <property type="entry name" value="AcgluKinase_fam"/>
</dbReference>
<dbReference type="InterPro" id="IPR037528">
    <property type="entry name" value="ArgB"/>
</dbReference>
<dbReference type="InterPro" id="IPR001048">
    <property type="entry name" value="Asp/Glu/Uridylate_kinase"/>
</dbReference>
<dbReference type="InterPro" id="IPR001057">
    <property type="entry name" value="Glu/AcGlu_kinase"/>
</dbReference>
<dbReference type="InterPro" id="IPR041727">
    <property type="entry name" value="NAGK-C"/>
</dbReference>
<dbReference type="NCBIfam" id="TIGR00761">
    <property type="entry name" value="argB"/>
    <property type="match status" value="1"/>
</dbReference>
<dbReference type="PANTHER" id="PTHR23342">
    <property type="entry name" value="N-ACETYLGLUTAMATE SYNTHASE"/>
    <property type="match status" value="1"/>
</dbReference>
<dbReference type="PANTHER" id="PTHR23342:SF0">
    <property type="entry name" value="N-ACETYLGLUTAMATE SYNTHASE, MITOCHONDRIAL"/>
    <property type="match status" value="1"/>
</dbReference>
<dbReference type="Pfam" id="PF00696">
    <property type="entry name" value="AA_kinase"/>
    <property type="match status" value="1"/>
</dbReference>
<dbReference type="PIRSF" id="PIRSF000728">
    <property type="entry name" value="NAGK"/>
    <property type="match status" value="1"/>
</dbReference>
<dbReference type="PRINTS" id="PR00474">
    <property type="entry name" value="GLU5KINASE"/>
</dbReference>
<dbReference type="SUPFAM" id="SSF53633">
    <property type="entry name" value="Carbamate kinase-like"/>
    <property type="match status" value="1"/>
</dbReference>
<sequence>MQNSLQVAQVIISALPYIQKFRNKIFVVKYGGSAQIDDTLKNDFVRDIALLQLVGCKVVVVHGGGKKINSYLDRLHIKSEFVDGLRVTDKEAMEIVEMVLSGNINKEITALLNKNGARAIGVSGKDANLLKARILNNGKYGFVGEIERVNTYVLNGLLENGLIPVVAPVATDDEANSYNINADLCASKIASALKAERVIFLTDTRGILDKDGNLISKLNEAHITALKEDGTINGGMIPKVDAALECVKNGVANAHILDGRLPHSLLLELFTDDGIGTMIKG</sequence>